<name>BCL8_HUMAN</name>
<sequence length="100" mass="11233">MSCCLSSRVHITRPVLEQFLSFAKYLDGLSHGVPLLKQLCDHILFINPAIWIHTPAKVQLSLYTYLSAEFIGTATIYTTICRIGTVIKDNAHLKILLLGY</sequence>
<feature type="chain" id="PRO_0000324087" description="Putative protein BCL8">
    <location>
        <begin position="1"/>
        <end position="100"/>
    </location>
</feature>
<feature type="sequence variant" id="VAR_039648" description="In dbSNP:rs6422240." evidence="2">
    <original>V</original>
    <variation>A</variation>
    <location>
        <position position="33"/>
    </location>
</feature>
<feature type="sequence variant" id="VAR_039649" description="In dbSNP:rs6422239.">
    <original>T</original>
    <variation>I</variation>
    <location>
        <position position="54"/>
    </location>
</feature>
<feature type="sequence variant" id="VAR_039650" description="In dbSNP:rs7497658." evidence="2">
    <original>C</original>
    <variation>R</variation>
    <location>
        <position position="81"/>
    </location>
</feature>
<feature type="sequence conflict" description="In Ref. 1; DA278599." evidence="4" ref="1">
    <original>H</original>
    <variation>R</variation>
    <location>
        <position position="92"/>
    </location>
</feature>
<protein>
    <recommendedName>
        <fullName>Putative protein BCL8</fullName>
    </recommendedName>
    <alternativeName>
        <fullName>Neurobeachin pseudogene 1</fullName>
    </alternativeName>
</protein>
<reference key="1">
    <citation type="journal article" date="2004" name="Nat. Genet.">
        <title>Complete sequencing and characterization of 21,243 full-length human cDNAs.</title>
        <authorList>
            <person name="Ota T."/>
            <person name="Suzuki Y."/>
            <person name="Nishikawa T."/>
            <person name="Otsuki T."/>
            <person name="Sugiyama T."/>
            <person name="Irie R."/>
            <person name="Wakamatsu A."/>
            <person name="Hayashi K."/>
            <person name="Sato H."/>
            <person name="Nagai K."/>
            <person name="Kimura K."/>
            <person name="Makita H."/>
            <person name="Sekine M."/>
            <person name="Obayashi M."/>
            <person name="Nishi T."/>
            <person name="Shibahara T."/>
            <person name="Tanaka T."/>
            <person name="Ishii S."/>
            <person name="Yamamoto J."/>
            <person name="Saito K."/>
            <person name="Kawai Y."/>
            <person name="Isono Y."/>
            <person name="Nakamura Y."/>
            <person name="Nagahari K."/>
            <person name="Murakami K."/>
            <person name="Yasuda T."/>
            <person name="Iwayanagi T."/>
            <person name="Wagatsuma M."/>
            <person name="Shiratori A."/>
            <person name="Sudo H."/>
            <person name="Hosoiri T."/>
            <person name="Kaku Y."/>
            <person name="Kodaira H."/>
            <person name="Kondo H."/>
            <person name="Sugawara M."/>
            <person name="Takahashi M."/>
            <person name="Kanda K."/>
            <person name="Yokoi T."/>
            <person name="Furuya T."/>
            <person name="Kikkawa E."/>
            <person name="Omura Y."/>
            <person name="Abe K."/>
            <person name="Kamihara K."/>
            <person name="Katsuta N."/>
            <person name="Sato K."/>
            <person name="Tanikawa M."/>
            <person name="Yamazaki M."/>
            <person name="Ninomiya K."/>
            <person name="Ishibashi T."/>
            <person name="Yamashita H."/>
            <person name="Murakawa K."/>
            <person name="Fujimori K."/>
            <person name="Tanai H."/>
            <person name="Kimata M."/>
            <person name="Watanabe M."/>
            <person name="Hiraoka S."/>
            <person name="Chiba Y."/>
            <person name="Ishida S."/>
            <person name="Ono Y."/>
            <person name="Takiguchi S."/>
            <person name="Watanabe S."/>
            <person name="Yosida M."/>
            <person name="Hotuta T."/>
            <person name="Kusano J."/>
            <person name="Kanehori K."/>
            <person name="Takahashi-Fujii A."/>
            <person name="Hara H."/>
            <person name="Tanase T.-O."/>
            <person name="Nomura Y."/>
            <person name="Togiya S."/>
            <person name="Komai F."/>
            <person name="Hara R."/>
            <person name="Takeuchi K."/>
            <person name="Arita M."/>
            <person name="Imose N."/>
            <person name="Musashino K."/>
            <person name="Yuuki H."/>
            <person name="Oshima A."/>
            <person name="Sasaki N."/>
            <person name="Aotsuka S."/>
            <person name="Yoshikawa Y."/>
            <person name="Matsunawa H."/>
            <person name="Ichihara T."/>
            <person name="Shiohata N."/>
            <person name="Sano S."/>
            <person name="Moriya S."/>
            <person name="Momiyama H."/>
            <person name="Satoh N."/>
            <person name="Takami S."/>
            <person name="Terashima Y."/>
            <person name="Suzuki O."/>
            <person name="Nakagawa S."/>
            <person name="Senoh A."/>
            <person name="Mizoguchi H."/>
            <person name="Goto Y."/>
            <person name="Shimizu F."/>
            <person name="Wakebe H."/>
            <person name="Hishigaki H."/>
            <person name="Watanabe T."/>
            <person name="Sugiyama A."/>
            <person name="Takemoto M."/>
            <person name="Kawakami B."/>
            <person name="Yamazaki M."/>
            <person name="Watanabe K."/>
            <person name="Kumagai A."/>
            <person name="Itakura S."/>
            <person name="Fukuzumi Y."/>
            <person name="Fujimori Y."/>
            <person name="Komiyama M."/>
            <person name="Tashiro H."/>
            <person name="Tanigami A."/>
            <person name="Fujiwara T."/>
            <person name="Ono T."/>
            <person name="Yamada K."/>
            <person name="Fujii Y."/>
            <person name="Ozaki K."/>
            <person name="Hirao M."/>
            <person name="Ohmori Y."/>
            <person name="Kawabata A."/>
            <person name="Hikiji T."/>
            <person name="Kobatake N."/>
            <person name="Inagaki H."/>
            <person name="Ikema Y."/>
            <person name="Okamoto S."/>
            <person name="Okitani R."/>
            <person name="Kawakami T."/>
            <person name="Noguchi S."/>
            <person name="Itoh T."/>
            <person name="Shigeta K."/>
            <person name="Senba T."/>
            <person name="Matsumura K."/>
            <person name="Nakajima Y."/>
            <person name="Mizuno T."/>
            <person name="Morinaga M."/>
            <person name="Sasaki M."/>
            <person name="Togashi T."/>
            <person name="Oyama M."/>
            <person name="Hata H."/>
            <person name="Watanabe M."/>
            <person name="Komatsu T."/>
            <person name="Mizushima-Sugano J."/>
            <person name="Satoh T."/>
            <person name="Shirai Y."/>
            <person name="Takahashi Y."/>
            <person name="Nakagawa K."/>
            <person name="Okumura K."/>
            <person name="Nagase T."/>
            <person name="Nomura N."/>
            <person name="Kikuchi H."/>
            <person name="Masuho Y."/>
            <person name="Yamashita R."/>
            <person name="Nakai K."/>
            <person name="Yada T."/>
            <person name="Nakamura Y."/>
            <person name="Ohara O."/>
            <person name="Isogai T."/>
            <person name="Sugano S."/>
        </authorList>
    </citation>
    <scope>NUCLEOTIDE SEQUENCE [LARGE SCALE MRNA]</scope>
    <scope>VARIANTS ALA-33 AND ARG-81</scope>
    <source>
        <tissue>Prostate</tissue>
    </source>
</reference>
<reference key="2">
    <citation type="journal article" date="2006" name="Nature">
        <title>Analysis of the DNA sequence and duplication history of human chromosome 15.</title>
        <authorList>
            <person name="Zody M.C."/>
            <person name="Garber M."/>
            <person name="Sharpe T."/>
            <person name="Young S.K."/>
            <person name="Rowen L."/>
            <person name="O'Neill K."/>
            <person name="Whittaker C.A."/>
            <person name="Kamal M."/>
            <person name="Chang J.L."/>
            <person name="Cuomo C.A."/>
            <person name="Dewar K."/>
            <person name="FitzGerald M.G."/>
            <person name="Kodira C.D."/>
            <person name="Madan A."/>
            <person name="Qin S."/>
            <person name="Yang X."/>
            <person name="Abbasi N."/>
            <person name="Abouelleil A."/>
            <person name="Arachchi H.M."/>
            <person name="Baradarani L."/>
            <person name="Birditt B."/>
            <person name="Bloom S."/>
            <person name="Bloom T."/>
            <person name="Borowsky M.L."/>
            <person name="Burke J."/>
            <person name="Butler J."/>
            <person name="Cook A."/>
            <person name="DeArellano K."/>
            <person name="DeCaprio D."/>
            <person name="Dorris L. III"/>
            <person name="Dors M."/>
            <person name="Eichler E.E."/>
            <person name="Engels R."/>
            <person name="Fahey J."/>
            <person name="Fleetwood P."/>
            <person name="Friedman C."/>
            <person name="Gearin G."/>
            <person name="Hall J.L."/>
            <person name="Hensley G."/>
            <person name="Johnson E."/>
            <person name="Jones C."/>
            <person name="Kamat A."/>
            <person name="Kaur A."/>
            <person name="Locke D.P."/>
            <person name="Madan A."/>
            <person name="Munson G."/>
            <person name="Jaffe D.B."/>
            <person name="Lui A."/>
            <person name="Macdonald P."/>
            <person name="Mauceli E."/>
            <person name="Naylor J.W."/>
            <person name="Nesbitt R."/>
            <person name="Nicol R."/>
            <person name="O'Leary S.B."/>
            <person name="Ratcliffe A."/>
            <person name="Rounsley S."/>
            <person name="She X."/>
            <person name="Sneddon K.M.B."/>
            <person name="Stewart S."/>
            <person name="Sougnez C."/>
            <person name="Stone S.M."/>
            <person name="Topham K."/>
            <person name="Vincent D."/>
            <person name="Wang S."/>
            <person name="Zimmer A.R."/>
            <person name="Birren B.W."/>
            <person name="Hood L."/>
            <person name="Lander E.S."/>
            <person name="Nusbaum C."/>
        </authorList>
    </citation>
    <scope>NUCLEOTIDE SEQUENCE [LARGE SCALE GENOMIC DNA]</scope>
</reference>
<reference key="3">
    <citation type="journal article" date="1997" name="Proc. Natl. Acad. Sci. U.S.A.">
        <title>BCL8, a novel gene involved in translocations affecting band 15q11-13 in diffuse large-cell lymphoma.</title>
        <authorList>
            <person name="Dyomin V.G."/>
            <person name="Rao P.H."/>
            <person name="Dalla-Favera R."/>
            <person name="Chaganti R.S.K."/>
        </authorList>
    </citation>
    <scope>TISSUE SPECIFICITY</scope>
    <scope>CHROMOSOMAL TRANSLOCATION</scope>
</reference>
<reference key="4">
    <citation type="journal article" date="2002" name="Genomics">
        <title>BCL8 is a novel, evolutionarily conserved human gene family encoding proteins with presumptive protein kinase A anchoring function.</title>
        <authorList>
            <person name="Dyomin V.G."/>
            <person name="Chaganti S.R."/>
            <person name="Dyomina K."/>
            <person name="Palanisamy N."/>
            <person name="Murty V.V.V.S."/>
            <person name="Dalla-Favera R."/>
            <person name="Chaganti R.S.K."/>
        </authorList>
    </citation>
    <scope>TISSUE SPECIFICITY</scope>
    <scope>CHROMOSOMAL TRANSLOCATION</scope>
</reference>
<gene>
    <name type="primary">NBEAP1</name>
    <name type="synonym">BCL8</name>
    <name type="synonym">BCL8A</name>
</gene>
<evidence type="ECO:0000269" key="1">
    <source>
    </source>
</evidence>
<evidence type="ECO:0000269" key="2">
    <source>
    </source>
</evidence>
<evidence type="ECO:0000269" key="3">
    <source>
    </source>
</evidence>
<evidence type="ECO:0000305" key="4"/>
<keyword id="KW-0160">Chromosomal rearrangement</keyword>
<keyword id="KW-1185">Reference proteome</keyword>
<accession>P0C6P0</accession>
<comment type="tissue specificity">
    <text evidence="1 3">Expressed in prostate and testis.</text>
</comment>
<comment type="disease">
    <text>A chromosomal aberration involving BCL8 has been observed in diffuse large cell lymphoma (DLCL). Translocation t(14;15)(q32;q11-q13). The BCL8/IgH translocation leaves the coding region of BCL8 intact, but may have pathogenic effects due to alterations in the expression level of BCL8.</text>
</comment>
<comment type="caution">
    <text evidence="4">Could be the product of a pseudogene.</text>
</comment>
<comment type="online information" name="Atlas of Genetics and Cytogenetics in Oncology and Haematology">
    <link uri="https://atlasgeneticsoncology.org/gene/781/BCL8"/>
</comment>
<proteinExistence type="uncertain"/>
<organism>
    <name type="scientific">Homo sapiens</name>
    <name type="common">Human</name>
    <dbReference type="NCBI Taxonomy" id="9606"/>
    <lineage>
        <taxon>Eukaryota</taxon>
        <taxon>Metazoa</taxon>
        <taxon>Chordata</taxon>
        <taxon>Craniata</taxon>
        <taxon>Vertebrata</taxon>
        <taxon>Euteleostomi</taxon>
        <taxon>Mammalia</taxon>
        <taxon>Eutheria</taxon>
        <taxon>Euarchontoglires</taxon>
        <taxon>Primates</taxon>
        <taxon>Haplorrhini</taxon>
        <taxon>Catarrhini</taxon>
        <taxon>Hominidae</taxon>
        <taxon>Homo</taxon>
    </lineage>
</organism>
<dbReference type="EMBL" id="DA278599">
    <property type="status" value="NOT_ANNOTATED_CDS"/>
    <property type="molecule type" value="mRNA"/>
</dbReference>
<dbReference type="EMBL" id="AC131280">
    <property type="status" value="NOT_ANNOTATED_CDS"/>
    <property type="molecule type" value="Genomic_DNA"/>
</dbReference>
<dbReference type="BioMuta" id="HGNC:1007"/>
<dbReference type="PeptideAtlas" id="P0C6P0"/>
<dbReference type="AGR" id="HGNC:1007"/>
<dbReference type="GeneCards" id="NBEAP1"/>
<dbReference type="HGNC" id="HGNC:1007">
    <property type="gene designation" value="NBEAP1"/>
</dbReference>
<dbReference type="MIM" id="601889">
    <property type="type" value="gene"/>
</dbReference>
<dbReference type="neXtProt" id="NX_P0C6P0"/>
<dbReference type="InParanoid" id="P0C6P0"/>
<dbReference type="PAN-GO" id="P0C6P0">
    <property type="GO annotations" value="0 GO annotations based on evolutionary models"/>
</dbReference>
<dbReference type="ChiTaRS" id="NBEAP1">
    <property type="organism name" value="human"/>
</dbReference>
<dbReference type="Pharos" id="P0C6P0">
    <property type="development level" value="Tdark"/>
</dbReference>
<dbReference type="Proteomes" id="UP000005640">
    <property type="component" value="Unplaced"/>
</dbReference>
<dbReference type="RNAct" id="P0C6P0">
    <property type="molecule type" value="protein"/>
</dbReference>
<dbReference type="InterPro" id="IPR031570">
    <property type="entry name" value="NBEA/BDCP_DUF4704"/>
</dbReference>
<dbReference type="Pfam" id="PF15787">
    <property type="entry name" value="DUF4704"/>
    <property type="match status" value="1"/>
</dbReference>